<organism>
    <name type="scientific">Shewanella sp. (strain W3-18-1)</name>
    <dbReference type="NCBI Taxonomy" id="351745"/>
    <lineage>
        <taxon>Bacteria</taxon>
        <taxon>Pseudomonadati</taxon>
        <taxon>Pseudomonadota</taxon>
        <taxon>Gammaproteobacteria</taxon>
        <taxon>Alteromonadales</taxon>
        <taxon>Shewanellaceae</taxon>
        <taxon>Shewanella</taxon>
    </lineage>
</organism>
<sequence>MSEVTTAEFNEEGKYLRKIRSFVLREGRLTKGQAQAIESQWPTMGLDYSPVPLNLSEVFGREADTVLEIGFGMGASLVQMAKDAPEQNFIGIEVHKPGVGSCLSDAAIAGVTNLRVYHHDAMEVLEHAIADGSLARVQLFFPDPWHKKRHHKRRIVQAEFAELVRSKLKIGGVFHMATDWEEYSEHMLEVMNAAPGYKNQSVDDTVVPRPDHRPLTKFEARGHRLGHGVWDLMFERIV</sequence>
<proteinExistence type="inferred from homology"/>
<keyword id="KW-0489">Methyltransferase</keyword>
<keyword id="KW-0949">S-adenosyl-L-methionine</keyword>
<keyword id="KW-0808">Transferase</keyword>
<keyword id="KW-0819">tRNA processing</keyword>
<comment type="function">
    <text evidence="2">Catalyzes the formation of N(7)-methylguanine at position 46 (m7G46) in tRNA.</text>
</comment>
<comment type="catalytic activity">
    <reaction evidence="2">
        <text>guanosine(46) in tRNA + S-adenosyl-L-methionine = N(7)-methylguanosine(46) in tRNA + S-adenosyl-L-homocysteine</text>
        <dbReference type="Rhea" id="RHEA:42708"/>
        <dbReference type="Rhea" id="RHEA-COMP:10188"/>
        <dbReference type="Rhea" id="RHEA-COMP:10189"/>
        <dbReference type="ChEBI" id="CHEBI:57856"/>
        <dbReference type="ChEBI" id="CHEBI:59789"/>
        <dbReference type="ChEBI" id="CHEBI:74269"/>
        <dbReference type="ChEBI" id="CHEBI:74480"/>
        <dbReference type="EC" id="2.1.1.33"/>
    </reaction>
</comment>
<comment type="pathway">
    <text evidence="2">tRNA modification; N(7)-methylguanine-tRNA biosynthesis.</text>
</comment>
<comment type="similarity">
    <text evidence="2">Belongs to the class I-like SAM-binding methyltransferase superfamily. TrmB family.</text>
</comment>
<gene>
    <name evidence="2" type="primary">trmB</name>
    <name type="ordered locus">Sputw3181_1312</name>
</gene>
<feature type="chain" id="PRO_0000288227" description="tRNA (guanine-N(7)-)-methyltransferase">
    <location>
        <begin position="1"/>
        <end position="238"/>
    </location>
</feature>
<feature type="active site" evidence="1">
    <location>
        <position position="143"/>
    </location>
</feature>
<feature type="binding site" evidence="2">
    <location>
        <position position="68"/>
    </location>
    <ligand>
        <name>S-adenosyl-L-methionine</name>
        <dbReference type="ChEBI" id="CHEBI:59789"/>
    </ligand>
</feature>
<feature type="binding site" evidence="2">
    <location>
        <position position="93"/>
    </location>
    <ligand>
        <name>S-adenosyl-L-methionine</name>
        <dbReference type="ChEBI" id="CHEBI:59789"/>
    </ligand>
</feature>
<feature type="binding site" evidence="2">
    <location>
        <position position="120"/>
    </location>
    <ligand>
        <name>S-adenosyl-L-methionine</name>
        <dbReference type="ChEBI" id="CHEBI:59789"/>
    </ligand>
</feature>
<feature type="binding site" evidence="2">
    <location>
        <position position="143"/>
    </location>
    <ligand>
        <name>S-adenosyl-L-methionine</name>
        <dbReference type="ChEBI" id="CHEBI:59789"/>
    </ligand>
</feature>
<feature type="binding site" evidence="2">
    <location>
        <position position="147"/>
    </location>
    <ligand>
        <name>substrate</name>
    </ligand>
</feature>
<feature type="binding site" evidence="2">
    <location>
        <position position="179"/>
    </location>
    <ligand>
        <name>substrate</name>
    </ligand>
</feature>
<feature type="binding site" evidence="2">
    <location>
        <begin position="216"/>
        <end position="219"/>
    </location>
    <ligand>
        <name>substrate</name>
    </ligand>
</feature>
<accession>A1RHL0</accession>
<evidence type="ECO:0000250" key="1"/>
<evidence type="ECO:0000255" key="2">
    <source>
        <dbReference type="HAMAP-Rule" id="MF_01057"/>
    </source>
</evidence>
<reference key="1">
    <citation type="submission" date="2006-12" db="EMBL/GenBank/DDBJ databases">
        <title>Complete sequence of Shewanella sp. W3-18-1.</title>
        <authorList>
            <consortium name="US DOE Joint Genome Institute"/>
            <person name="Copeland A."/>
            <person name="Lucas S."/>
            <person name="Lapidus A."/>
            <person name="Barry K."/>
            <person name="Detter J.C."/>
            <person name="Glavina del Rio T."/>
            <person name="Hammon N."/>
            <person name="Israni S."/>
            <person name="Dalin E."/>
            <person name="Tice H."/>
            <person name="Pitluck S."/>
            <person name="Chain P."/>
            <person name="Malfatti S."/>
            <person name="Shin M."/>
            <person name="Vergez L."/>
            <person name="Schmutz J."/>
            <person name="Larimer F."/>
            <person name="Land M."/>
            <person name="Hauser L."/>
            <person name="Kyrpides N."/>
            <person name="Lykidis A."/>
            <person name="Tiedje J."/>
            <person name="Richardson P."/>
        </authorList>
    </citation>
    <scope>NUCLEOTIDE SEQUENCE [LARGE SCALE GENOMIC DNA]</scope>
    <source>
        <strain>W3-18-1</strain>
    </source>
</reference>
<dbReference type="EC" id="2.1.1.33" evidence="2"/>
<dbReference type="EMBL" id="CP000503">
    <property type="protein sequence ID" value="ABM24155.1"/>
    <property type="molecule type" value="Genomic_DNA"/>
</dbReference>
<dbReference type="RefSeq" id="WP_011788661.1">
    <property type="nucleotide sequence ID" value="NC_008750.1"/>
</dbReference>
<dbReference type="SMR" id="A1RHL0"/>
<dbReference type="KEGG" id="shw:Sputw3181_1312"/>
<dbReference type="HOGENOM" id="CLU_050910_0_1_6"/>
<dbReference type="UniPathway" id="UPA00989"/>
<dbReference type="Proteomes" id="UP000002597">
    <property type="component" value="Chromosome"/>
</dbReference>
<dbReference type="GO" id="GO:0043527">
    <property type="term" value="C:tRNA methyltransferase complex"/>
    <property type="evidence" value="ECO:0007669"/>
    <property type="project" value="TreeGrafter"/>
</dbReference>
<dbReference type="GO" id="GO:0008176">
    <property type="term" value="F:tRNA (guanine(46)-N7)-methyltransferase activity"/>
    <property type="evidence" value="ECO:0007669"/>
    <property type="project" value="UniProtKB-UniRule"/>
</dbReference>
<dbReference type="CDD" id="cd02440">
    <property type="entry name" value="AdoMet_MTases"/>
    <property type="match status" value="1"/>
</dbReference>
<dbReference type="FunFam" id="3.40.50.150:FF:000024">
    <property type="entry name" value="tRNA (guanine-N(7)-)-methyltransferase"/>
    <property type="match status" value="1"/>
</dbReference>
<dbReference type="Gene3D" id="3.40.50.150">
    <property type="entry name" value="Vaccinia Virus protein VP39"/>
    <property type="match status" value="1"/>
</dbReference>
<dbReference type="HAMAP" id="MF_01057">
    <property type="entry name" value="tRNA_methyltr_TrmB"/>
    <property type="match status" value="1"/>
</dbReference>
<dbReference type="InterPro" id="IPR029063">
    <property type="entry name" value="SAM-dependent_MTases_sf"/>
</dbReference>
<dbReference type="InterPro" id="IPR003358">
    <property type="entry name" value="tRNA_(Gua-N-7)_MeTrfase_Trmb"/>
</dbReference>
<dbReference type="InterPro" id="IPR055361">
    <property type="entry name" value="tRNA_methyltr_TrmB_bact"/>
</dbReference>
<dbReference type="NCBIfam" id="TIGR00091">
    <property type="entry name" value="tRNA (guanosine(46)-N7)-methyltransferase TrmB"/>
    <property type="match status" value="1"/>
</dbReference>
<dbReference type="PANTHER" id="PTHR23417">
    <property type="entry name" value="3-DEOXY-D-MANNO-OCTULOSONIC-ACID TRANSFERASE/TRNA GUANINE-N 7 - -METHYLTRANSFERASE"/>
    <property type="match status" value="1"/>
</dbReference>
<dbReference type="PANTHER" id="PTHR23417:SF14">
    <property type="entry name" value="PENTACOTRIPEPTIDE-REPEAT REGION OF PRORP DOMAIN-CONTAINING PROTEIN"/>
    <property type="match status" value="1"/>
</dbReference>
<dbReference type="Pfam" id="PF02390">
    <property type="entry name" value="Methyltransf_4"/>
    <property type="match status" value="1"/>
</dbReference>
<dbReference type="SUPFAM" id="SSF53335">
    <property type="entry name" value="S-adenosyl-L-methionine-dependent methyltransferases"/>
    <property type="match status" value="1"/>
</dbReference>
<dbReference type="PROSITE" id="PS51625">
    <property type="entry name" value="SAM_MT_TRMB"/>
    <property type="match status" value="1"/>
</dbReference>
<name>TRMB_SHESW</name>
<protein>
    <recommendedName>
        <fullName evidence="2">tRNA (guanine-N(7)-)-methyltransferase</fullName>
        <ecNumber evidence="2">2.1.1.33</ecNumber>
    </recommendedName>
    <alternativeName>
        <fullName evidence="2">tRNA (guanine(46)-N(7))-methyltransferase</fullName>
    </alternativeName>
    <alternativeName>
        <fullName evidence="2">tRNA(m7G46)-methyltransferase</fullName>
    </alternativeName>
</protein>